<comment type="function">
    <text evidence="4 6 7 8">Alpha-conotoxins act on postsynaptic membranes, they bind to the nicotinic acetylcholine receptors (nAChR) and thus inhibit them. This toxin potently inhibits alpha-3 containing subunit nAChR. It inhibits alpha-3-beta-2/CHRNA3-CHRNB2 (IC(50)=10.7-33 nM (rat)/132.4-704.1 nM (human)) and alpha-3-beta-4/CHRNA3-CHRNB4 (IC(50)=47.3-97 nM (rat)/52.1 nM (human)) (PubMed:22108175, PubMed:25411242, PubMed:26438212, PubMed:27646000). It also inhibits alpha-7/CHRNA7 nAChR with IC(50)=103-210 nM (human)/41-61.2 nM (rat) nAChRs (PubMed:22108175, PubMed:25411242, PubMed:30025921). It is more potent on alpha-3-beta-2 receptors in human than in rat, due to a variation (Pro vs Gln) in alpha-3 subunit in these orthologs (PubMed:26438212). Conversely, does not show species-specific differences in sensitivity at the alpha-3-beta-4 receptor (PubMed:26438212).</text>
</comment>
<comment type="subcellular location">
    <subcellularLocation>
        <location evidence="3 4">Secreted</location>
    </subcellularLocation>
</comment>
<comment type="tissue specificity">
    <text evidence="3 4">Expressed by the venom duct.</text>
</comment>
<comment type="domain">
    <text evidence="13">The cysteine framework is I (CC-C-C). Alpha4/7 pattern.</text>
</comment>
<comment type="mass spectrometry">
    <text>Monoisotopic mass.</text>
</comment>
<comment type="miscellaneous">
    <text evidence="14">Oligosaccharide chains affect the binding of this toxin at the human alpha-3-beta-4 nAChR through unstable hydrogen bond interactions with His-63 and by affecting the C-loop conformation of the binding sites.</text>
</comment>
<comment type="miscellaneous">
    <text evidence="4">Negative results: does not inhibit muscle (alpha-beta-gamma-delta) and neuronal alpha-4-beta-2 and alpha-9-alpha-10 nAChRs.</text>
</comment>
<comment type="similarity">
    <text evidence="13">Belongs to the conotoxin A superfamily.</text>
</comment>
<comment type="sequence caution" evidence="13">
    <conflict type="erroneous termination">
        <sequence resource="EMBL-CDS" id="CCB84446"/>
    </conflict>
    <text>Truncated C-terminus.</text>
</comment>
<reference key="1">
    <citation type="journal article" date="2012" name="Biochem. Pharmacol.">
        <title>RegIIA: an alpha4/7-conotoxin from the venom of Conus regius that potently blocks alpha3beta4 nAChRs.</title>
        <authorList>
            <person name="Franco A."/>
            <person name="Kompella S.N."/>
            <person name="Akondi K.B."/>
            <person name="Melaun C."/>
            <person name="Daly N.L."/>
            <person name="Luetje C.W."/>
            <person name="Alewood P.F."/>
            <person name="Craik D.J."/>
            <person name="Adams D.J."/>
            <person name="Mari F."/>
        </authorList>
    </citation>
    <scope>NUCLEOTIDE SEQUENCE [GENOMIC DNA]</scope>
    <scope>PROTEIN SEQUENCE OF 50-65</scope>
    <scope>SYNTHESIS OF 50-65</scope>
    <scope>FUNCTION</scope>
    <scope>DISULFIDE BOND</scope>
    <scope>SUBCELLULAR LOCATION</scope>
    <scope>AMIDATION AT CYS-65</scope>
    <scope>MASS SPECTROMETRY</scope>
    <scope>STRUCTURE BY NMR OF 50-65</scope>
    <source>
        <tissue>Venom</tissue>
        <tissue>Venom duct</tissue>
    </source>
</reference>
<reference key="2">
    <citation type="journal article" date="2006" name="Prog. Mol. Subcell. Biol.">
        <title>Hyperhydroxylation: a new strategy for neuronal targeting by venomous marine molluscs.</title>
        <authorList>
            <person name="Franco A."/>
            <person name="Pisarewicz K."/>
            <person name="Moller C."/>
            <person name="Mora D."/>
            <person name="Fields G.B."/>
            <person name="Mari F."/>
        </authorList>
    </citation>
    <scope>PROTEIN SEQUENCE OF 50-65</scope>
    <scope>SUBCELLULAR LOCATION</scope>
    <scope>AMIDATION AT CYS-65</scope>
    <source>
        <tissue>Venom</tissue>
    </source>
</reference>
<reference key="3">
    <citation type="journal article" date="2015" name="J. Biol. Chem.">
        <title>Alanine scan of alpha-conotoxin RegIIA reveals a selective alpha3beta4 nicotinic acetylcholine receptor antagonist.</title>
        <authorList>
            <person name="Kompella S.N."/>
            <person name="Hung A."/>
            <person name="Clark R.J."/>
            <person name="Mari F."/>
            <person name="Adams D.J."/>
        </authorList>
    </citation>
    <scope>FUNCTION</scope>
    <scope>MUTAGENESIS OF ASN-58; VAL-59; ASN-60; ASN-61; PRO-62; HIS-63 AND ILE-64</scope>
    <scope>SYNTHESIS OF 50-65</scope>
</reference>
<reference key="4">
    <citation type="journal article" date="2015" name="Mol. Pharmacol.">
        <title>Molecular basis for differential sensitivity of alpha-conotoxin RegIIA at rat and human neuronal nicotinic acetylcholine receptors.</title>
        <authorList>
            <person name="Kompella S.N."/>
            <person name="Cuny H."/>
            <person name="Hung A."/>
            <person name="Adams D.J."/>
        </authorList>
    </citation>
    <scope>FUNCTION</scope>
    <scope>SYNTHESIS OF 50-65</scope>
</reference>
<reference key="5">
    <citation type="journal article" date="2016" name="J. Biol. Chem.">
        <title>Key structural determinants in the agonist binding loops of human beta2 and beta4 nicotinic acetylcholine receptor subunits contribute to alpha3beta4 subtype selectivity of alpha-conotoxins.</title>
        <authorList>
            <person name="Cuny H."/>
            <person name="Kompella S.N."/>
            <person name="Tae H.S."/>
            <person name="Yu R."/>
            <person name="Adams D.J."/>
        </authorList>
    </citation>
    <scope>FUNCTION</scope>
    <scope>SYNTHESIS OF 50-65</scope>
</reference>
<reference key="6">
    <citation type="journal article" date="2018" name="Neuropharmacology">
        <title>Species specificity of rat and human alpha7 nicotinic acetylcholine receptors towards different classes of peptide and protein antagonists.</title>
        <authorList>
            <person name="Yu J."/>
            <person name="Zhu X."/>
            <person name="Zhang L."/>
            <person name="Kudryavtsev D."/>
            <person name="Kasheverov I."/>
            <person name="Lei Y."/>
            <person name="Zhangsun D."/>
            <person name="Tsetlin V."/>
            <person name="Luo S."/>
        </authorList>
    </citation>
    <scope>FUNCTION ON ALPHA-7/CHRNA7 NACHR</scope>
    <scope>MUTAGENESIS OF HIS-54</scope>
    <scope>3D-STRUCTURE MODELING</scope>
    <scope>SYNTHESIS OF 50-65</scope>
</reference>
<reference key="7">
    <citation type="journal article" date="2020" name="ACS Chem. Neurosci.">
        <title>Rational design of alpha-conotoxin RegIIA analogues selectively inhibiting the human alpha3beta2 nicotinic acetylcholine receptor through computational scanning.</title>
        <authorList>
            <person name="Xu Q."/>
            <person name="Tae H.S."/>
            <person name="Wang Z."/>
            <person name="Jiang T."/>
            <person name="Adams D.J."/>
            <person name="Yu R."/>
        </authorList>
    </citation>
    <scope>MUTAGENESIS OF ASN-58</scope>
    <scope>SYNTHESIS OF 50-65</scope>
</reference>
<reference key="8">
    <citation type="journal article" date="2022" name="Mar. Life Sci. Technol.">
        <title>Mechanism of interactions between alpha-conotoxin RegIIA and carbohydrates at the human alpha3beta4 nicotinic acetylcholine receptor.</title>
        <authorList>
            <person name="Zheng M."/>
            <person name="Tae H.S."/>
            <person name="Xue L."/>
            <person name="Jian T."/>
            <person name="Yu R."/>
        </authorList>
    </citation>
    <scope>MUTAGENESIS OF HIS-63</scope>
    <scope>SYNTHESIS OF 50-65</scope>
</reference>
<organism>
    <name type="scientific">Conus regius</name>
    <name type="common">Crown cone</name>
    <dbReference type="NCBI Taxonomy" id="101314"/>
    <lineage>
        <taxon>Eukaryota</taxon>
        <taxon>Metazoa</taxon>
        <taxon>Spiralia</taxon>
        <taxon>Lophotrochozoa</taxon>
        <taxon>Mollusca</taxon>
        <taxon>Gastropoda</taxon>
        <taxon>Caenogastropoda</taxon>
        <taxon>Neogastropoda</taxon>
        <taxon>Conoidea</taxon>
        <taxon>Conidae</taxon>
        <taxon>Conus</taxon>
        <taxon>Stephanoconus</taxon>
    </lineage>
</organism>
<evidence type="ECO:0000250" key="1">
    <source>
        <dbReference type="UniProtKB" id="P56636"/>
    </source>
</evidence>
<evidence type="ECO:0000255" key="2"/>
<evidence type="ECO:0000269" key="3">
    <source>
    </source>
</evidence>
<evidence type="ECO:0000269" key="4">
    <source>
    </source>
</evidence>
<evidence type="ECO:0000269" key="5">
    <source>
    </source>
</evidence>
<evidence type="ECO:0000269" key="6">
    <source>
    </source>
</evidence>
<evidence type="ECO:0000269" key="7">
    <source>
    </source>
</evidence>
<evidence type="ECO:0000269" key="8">
    <source>
    </source>
</evidence>
<evidence type="ECO:0000269" key="9">
    <source>
    </source>
</evidence>
<evidence type="ECO:0000269" key="10">
    <source ref="8"/>
</evidence>
<evidence type="ECO:0000303" key="11">
    <source>
    </source>
</evidence>
<evidence type="ECO:0000303" key="12">
    <source>
    </source>
</evidence>
<evidence type="ECO:0000305" key="13"/>
<evidence type="ECO:0000305" key="14">
    <source ref="8"/>
</evidence>
<dbReference type="EMBL" id="FR871900">
    <property type="protein sequence ID" value="CCB84446.1"/>
    <property type="status" value="ALT_TERM"/>
    <property type="molecule type" value="Genomic_DNA"/>
</dbReference>
<dbReference type="BMRB" id="P85013"/>
<dbReference type="ConoServer" id="32">
    <property type="toxin name" value="RegIIA"/>
</dbReference>
<dbReference type="GO" id="GO:0005576">
    <property type="term" value="C:extracellular region"/>
    <property type="evidence" value="ECO:0007669"/>
    <property type="project" value="UniProtKB-SubCell"/>
</dbReference>
<dbReference type="GO" id="GO:0035792">
    <property type="term" value="C:host cell postsynaptic membrane"/>
    <property type="evidence" value="ECO:0007669"/>
    <property type="project" value="UniProtKB-KW"/>
</dbReference>
<dbReference type="GO" id="GO:0030550">
    <property type="term" value="F:acetylcholine receptor inhibitor activity"/>
    <property type="evidence" value="ECO:0007669"/>
    <property type="project" value="UniProtKB-KW"/>
</dbReference>
<dbReference type="GO" id="GO:0099106">
    <property type="term" value="F:ion channel regulator activity"/>
    <property type="evidence" value="ECO:0007669"/>
    <property type="project" value="UniProtKB-KW"/>
</dbReference>
<dbReference type="GO" id="GO:0090729">
    <property type="term" value="F:toxin activity"/>
    <property type="evidence" value="ECO:0007669"/>
    <property type="project" value="UniProtKB-KW"/>
</dbReference>
<dbReference type="InterPro" id="IPR009958">
    <property type="entry name" value="Conotoxin_a-typ"/>
</dbReference>
<dbReference type="InterPro" id="IPR018072">
    <property type="entry name" value="Conotoxin_a-typ_CS"/>
</dbReference>
<dbReference type="Pfam" id="PF07365">
    <property type="entry name" value="Toxin_8"/>
    <property type="match status" value="1"/>
</dbReference>
<dbReference type="PROSITE" id="PS60014">
    <property type="entry name" value="ALPHA_CONOTOXIN"/>
    <property type="match status" value="1"/>
</dbReference>
<protein>
    <recommendedName>
        <fullName evidence="12">Alpha-conotoxin RegIIA</fullName>
    </recommendedName>
    <alternativeName>
        <fullName evidence="11">Reg2a</fullName>
    </alternativeName>
</protein>
<accession>P85013</accession>
<accession>S0BDZ3</accession>
<feature type="signal peptide" evidence="2">
    <location>
        <begin position="1"/>
        <end position="21"/>
    </location>
</feature>
<feature type="propeptide" id="PRO_0000439620" evidence="3">
    <location>
        <begin position="22"/>
        <end position="49"/>
    </location>
</feature>
<feature type="peptide" id="PRO_0000259389" description="Alpha-conotoxin RegIIA" evidence="3">
    <location>
        <begin position="50"/>
        <end position="65"/>
    </location>
</feature>
<feature type="region of interest" description="Ser-Xaa-Pro motif, crucial for potent interaction with nAChR" evidence="1">
    <location>
        <begin position="53"/>
        <end position="55"/>
    </location>
</feature>
<feature type="site" description="Importance for inhibitory activity towards human alpha-3-beta-4 nAChRs, and essential to the secondary structure" evidence="10">
    <location>
        <position position="63"/>
    </location>
</feature>
<feature type="modified residue" description="Cysteine amide" evidence="3 4">
    <location>
        <position position="65"/>
    </location>
</feature>
<feature type="disulfide bond" evidence="4">
    <location>
        <begin position="51"/>
        <end position="57"/>
    </location>
</feature>
<feature type="disulfide bond" evidence="4">
    <location>
        <begin position="52"/>
        <end position="65"/>
    </location>
</feature>
<feature type="mutagenesis site" description="Decrease in inhibition potency of AChR alpha-7/CHRNA7 (2.5-fold on rat receptor and 65-fold on human receptor)." evidence="8">
    <original>H</original>
    <variation>D</variation>
    <location>
        <position position="54"/>
    </location>
</feature>
<feature type="mutagenesis site" description="No change in ability to inhibit rat alpha-3-beta-2 nAChRs. Loss of ability to inhibit alpha-3-beta-4 and alpha-7 nAChRs." evidence="5">
    <original>N</original>
    <variation>A</variation>
    <location>
        <position position="58"/>
    </location>
</feature>
<feature type="mutagenesis site" description="Gain of selectivity towards human alpha-3-beta-2 nAChRs. Very important increase in ability to inhibit alpha-3-beta-2 nAChRs, and no change in ability to inhibit alpha-3-beta-4 nAChRs." evidence="9">
    <original>N</original>
    <variation>F</variation>
    <variation>W</variation>
    <variation>Y</variation>
    <location>
        <position position="58"/>
    </location>
</feature>
<feature type="mutagenesis site" description="No change in ability to inhibit rat alpha-3-beta-2 and alpha-3-beta-4 nAChRs. Moderate decrease in ability to inhibit rat alpha-7 nAChRs." evidence="5">
    <original>V</original>
    <variation>A</variation>
    <location>
        <position position="59"/>
    </location>
</feature>
<feature type="mutagenesis site" description="Gain of selectivity for alpha-3-beta-4 nAChRs. 7-fold and 1000-fold decrease in ability to inhibit alpha-3-beta-4 and alpha-3-beta-2 nAChRs, respectively." evidence="5">
    <original>NN</original>
    <variation>AA</variation>
    <location>
        <begin position="60"/>
        <end position="61"/>
    </location>
</feature>
<feature type="mutagenesis site" description="Gain of selectivity for alpha-3-beta-4 nAChRs. Moderate decrease in ability to inhibit rat alpha-3-beta-2 nAChRs. No change in ability to inhibit rat alpha-3-beta-4 nAChRs. Loss of ability to inhibit alpha-7 nAChRs." evidence="5">
    <original>N</original>
    <variation>A</variation>
    <location>
        <position position="60"/>
    </location>
</feature>
<feature type="mutagenesis site" description="Gain of selectivity for alpha-3-beta-4 nAChRs. Moderate decrease in ability to inhibit rat alpha-3-beta-2 nAChRs. Small decrease in ability to inhibit rat alpha-3-beta-4 nAChRs. Loss of ability to inhibit rat alpha-7 nAChRs." evidence="5">
    <original>N</original>
    <variation>A</variation>
    <location>
        <position position="61"/>
    </location>
</feature>
<feature type="mutagenesis site" description="No change in ability to inhibit rat alpha-3-beta-2 nAChRs. Small decrease in ability to inhibit rat alpha-3-beta-4 and alpha-7 nAChRs." evidence="5">
    <original>P</original>
    <variation>A</variation>
    <location>
        <position position="62"/>
    </location>
</feature>
<feature type="mutagenesis site" description="Loss of ability to inhibit rat alpha-3-beta-2, alpha-3-beta-4, and alpha-7 nAChRs." evidence="5">
    <original>H</original>
    <variation>A</variation>
    <location>
        <position position="63"/>
    </location>
</feature>
<feature type="mutagenesis site" description="Decrease in inhibiting potency towards human alpha-3-beta-4/CHRNA3-CHRNB4 nAChRs." evidence="10">
    <original>H</original>
    <variation>D</variation>
    <variation>N</variation>
    <variation>S</variation>
    <variation>W</variation>
    <variation>Y</variation>
    <location>
        <position position="63"/>
    </location>
</feature>
<feature type="mutagenesis site" description="Moderate decrease in ability to inhibit rat alpha-3-beta-2 nAChRs. No change in ability to inhibit rat alpha-3-beta-4 nAChRs. Moderate decrease in ability to inhibit rat alpha-7 nAChRs." evidence="5">
    <original>I</original>
    <variation>A</variation>
    <location>
        <position position="64"/>
    </location>
</feature>
<proteinExistence type="evidence at protein level"/>
<keyword id="KW-0008">Acetylcholine receptor inhibiting toxin</keyword>
<keyword id="KW-0027">Amidation</keyword>
<keyword id="KW-0165">Cleavage on pair of basic residues</keyword>
<keyword id="KW-0903">Direct protein sequencing</keyword>
<keyword id="KW-1015">Disulfide bond</keyword>
<keyword id="KW-0872">Ion channel impairing toxin</keyword>
<keyword id="KW-0528">Neurotoxin</keyword>
<keyword id="KW-0629">Postsynaptic neurotoxin</keyword>
<keyword id="KW-0964">Secreted</keyword>
<keyword id="KW-0732">Signal</keyword>
<keyword id="KW-0800">Toxin</keyword>
<sequence>MGMRMMFTVFLLVVLTTTVVSSTSVRASDGRNAAADNRASDLIAQIVRRGCCSHPACNVNNPHICG</sequence>
<name>CA12A_CONRE</name>